<feature type="chain" id="PRO_1000011838" description="Diaminopimelate epimerase">
    <location>
        <begin position="1"/>
        <end position="288"/>
    </location>
</feature>
<feature type="active site" description="Proton donor" evidence="1">
    <location>
        <position position="76"/>
    </location>
</feature>
<feature type="active site" description="Proton acceptor" evidence="1">
    <location>
        <position position="226"/>
    </location>
</feature>
<feature type="binding site" evidence="1">
    <location>
        <position position="14"/>
    </location>
    <ligand>
        <name>substrate</name>
    </ligand>
</feature>
<feature type="binding site" evidence="1">
    <location>
        <position position="67"/>
    </location>
    <ligand>
        <name>substrate</name>
    </ligand>
</feature>
<feature type="binding site" evidence="1">
    <location>
        <begin position="77"/>
        <end position="78"/>
    </location>
    <ligand>
        <name>substrate</name>
    </ligand>
</feature>
<feature type="binding site" evidence="1">
    <location>
        <position position="166"/>
    </location>
    <ligand>
        <name>substrate</name>
    </ligand>
</feature>
<feature type="binding site" evidence="1">
    <location>
        <position position="199"/>
    </location>
    <ligand>
        <name>substrate</name>
    </ligand>
</feature>
<feature type="binding site" evidence="1">
    <location>
        <begin position="217"/>
        <end position="218"/>
    </location>
    <ligand>
        <name>substrate</name>
    </ligand>
</feature>
<feature type="binding site" evidence="1">
    <location>
        <begin position="227"/>
        <end position="228"/>
    </location>
    <ligand>
        <name>substrate</name>
    </ligand>
</feature>
<feature type="site" description="Could be important to modulate the pK values of the two catalytic cysteine residues" evidence="1">
    <location>
        <position position="168"/>
    </location>
</feature>
<feature type="site" description="Could be important to modulate the pK values of the two catalytic cysteine residues" evidence="1">
    <location>
        <position position="217"/>
    </location>
</feature>
<dbReference type="EC" id="5.1.1.7" evidence="1"/>
<dbReference type="EMBL" id="AE017194">
    <property type="protein sequence ID" value="AAS43975.1"/>
    <property type="molecule type" value="Genomic_DNA"/>
</dbReference>
<dbReference type="SMR" id="Q72YE7"/>
<dbReference type="KEGG" id="bca:BCE_5074"/>
<dbReference type="HOGENOM" id="CLU_053306_3_0_9"/>
<dbReference type="UniPathway" id="UPA00034">
    <property type="reaction ID" value="UER00025"/>
</dbReference>
<dbReference type="Proteomes" id="UP000002527">
    <property type="component" value="Chromosome"/>
</dbReference>
<dbReference type="GO" id="GO:0005829">
    <property type="term" value="C:cytosol"/>
    <property type="evidence" value="ECO:0007669"/>
    <property type="project" value="TreeGrafter"/>
</dbReference>
<dbReference type="GO" id="GO:0008837">
    <property type="term" value="F:diaminopimelate epimerase activity"/>
    <property type="evidence" value="ECO:0007669"/>
    <property type="project" value="UniProtKB-UniRule"/>
</dbReference>
<dbReference type="GO" id="GO:0009089">
    <property type="term" value="P:lysine biosynthetic process via diaminopimelate"/>
    <property type="evidence" value="ECO:0007669"/>
    <property type="project" value="UniProtKB-UniRule"/>
</dbReference>
<dbReference type="FunFam" id="3.10.310.10:FF:000004">
    <property type="entry name" value="Diaminopimelate epimerase"/>
    <property type="match status" value="1"/>
</dbReference>
<dbReference type="FunFam" id="3.10.310.10:FF:000006">
    <property type="entry name" value="Diaminopimelate epimerase"/>
    <property type="match status" value="1"/>
</dbReference>
<dbReference type="Gene3D" id="3.10.310.10">
    <property type="entry name" value="Diaminopimelate Epimerase, Chain A, domain 1"/>
    <property type="match status" value="2"/>
</dbReference>
<dbReference type="HAMAP" id="MF_00197">
    <property type="entry name" value="DAP_epimerase"/>
    <property type="match status" value="1"/>
</dbReference>
<dbReference type="InterPro" id="IPR018510">
    <property type="entry name" value="DAP_epimerase_AS"/>
</dbReference>
<dbReference type="InterPro" id="IPR001653">
    <property type="entry name" value="DAP_epimerase_DapF"/>
</dbReference>
<dbReference type="NCBIfam" id="TIGR00652">
    <property type="entry name" value="DapF"/>
    <property type="match status" value="1"/>
</dbReference>
<dbReference type="PANTHER" id="PTHR31689:SF0">
    <property type="entry name" value="DIAMINOPIMELATE EPIMERASE"/>
    <property type="match status" value="1"/>
</dbReference>
<dbReference type="PANTHER" id="PTHR31689">
    <property type="entry name" value="DIAMINOPIMELATE EPIMERASE, CHLOROPLASTIC"/>
    <property type="match status" value="1"/>
</dbReference>
<dbReference type="Pfam" id="PF01678">
    <property type="entry name" value="DAP_epimerase"/>
    <property type="match status" value="2"/>
</dbReference>
<dbReference type="SUPFAM" id="SSF54506">
    <property type="entry name" value="Diaminopimelate epimerase-like"/>
    <property type="match status" value="1"/>
</dbReference>
<dbReference type="PROSITE" id="PS01326">
    <property type="entry name" value="DAP_EPIMERASE"/>
    <property type="match status" value="1"/>
</dbReference>
<gene>
    <name evidence="1" type="primary">dapF</name>
    <name type="ordered locus">BCE_5074</name>
</gene>
<keyword id="KW-0028">Amino-acid biosynthesis</keyword>
<keyword id="KW-0963">Cytoplasm</keyword>
<keyword id="KW-0413">Isomerase</keyword>
<keyword id="KW-0457">Lysine biosynthesis</keyword>
<accession>Q72YE7</accession>
<name>DAPF_BACC1</name>
<proteinExistence type="inferred from homology"/>
<evidence type="ECO:0000255" key="1">
    <source>
        <dbReference type="HAMAP-Rule" id="MF_00197"/>
    </source>
</evidence>
<comment type="function">
    <text evidence="1">Catalyzes the stereoinversion of LL-2,6-diaminopimelate (L,L-DAP) to meso-diaminopimelate (meso-DAP), a precursor of L-lysine and an essential component of the bacterial peptidoglycan.</text>
</comment>
<comment type="catalytic activity">
    <reaction evidence="1">
        <text>(2S,6S)-2,6-diaminopimelate = meso-2,6-diaminopimelate</text>
        <dbReference type="Rhea" id="RHEA:15393"/>
        <dbReference type="ChEBI" id="CHEBI:57609"/>
        <dbReference type="ChEBI" id="CHEBI:57791"/>
        <dbReference type="EC" id="5.1.1.7"/>
    </reaction>
</comment>
<comment type="pathway">
    <text evidence="1">Amino-acid biosynthesis; L-lysine biosynthesis via DAP pathway; DL-2,6-diaminopimelate from LL-2,6-diaminopimelate: step 1/1.</text>
</comment>
<comment type="subunit">
    <text evidence="1">Homodimer.</text>
</comment>
<comment type="subcellular location">
    <subcellularLocation>
        <location evidence="1">Cytoplasm</location>
    </subcellularLocation>
</comment>
<comment type="similarity">
    <text evidence="1">Belongs to the diaminopimelate epimerase family.</text>
</comment>
<reference key="1">
    <citation type="journal article" date="2004" name="Nucleic Acids Res.">
        <title>The genome sequence of Bacillus cereus ATCC 10987 reveals metabolic adaptations and a large plasmid related to Bacillus anthracis pXO1.</title>
        <authorList>
            <person name="Rasko D.A."/>
            <person name="Ravel J."/>
            <person name="Oekstad O.A."/>
            <person name="Helgason E."/>
            <person name="Cer R.Z."/>
            <person name="Jiang L."/>
            <person name="Shores K.A."/>
            <person name="Fouts D.E."/>
            <person name="Tourasse N.J."/>
            <person name="Angiuoli S.V."/>
            <person name="Kolonay J.F."/>
            <person name="Nelson W.C."/>
            <person name="Kolstoe A.-B."/>
            <person name="Fraser C.M."/>
            <person name="Read T.D."/>
        </authorList>
    </citation>
    <scope>NUCLEOTIDE SEQUENCE [LARGE SCALE GENOMIC DNA]</scope>
    <source>
        <strain>ATCC 10987 / NRS 248</strain>
    </source>
</reference>
<sequence length="288" mass="31599">MSQFSFTKMHGLGNSYIYVNMFEEQIPEEDLALVAEKVSNINTGIGADGMILICPSDVAPVKMRMFNNDGSEGKSCGNGLRCVAKYAYEHKLVEDTVFTIETLAGIVTAEVTVEEGKVTLAKIDMGAPRLTRAEIPMLGEGETPFIRENFLYNNHRYAFTAVSMGNPHAVIFVDDVDQAPLTTLGPVLETHEMFPERVNVEFIEILNEEEMNFRVWERGSGVTQACGTGACAAVVASILNGKMERGKEITVHLAGGDLMIAWTEEGNVLMKGPAEVICRGVYEYKIEA</sequence>
<organism>
    <name type="scientific">Bacillus cereus (strain ATCC 10987 / NRS 248)</name>
    <dbReference type="NCBI Taxonomy" id="222523"/>
    <lineage>
        <taxon>Bacteria</taxon>
        <taxon>Bacillati</taxon>
        <taxon>Bacillota</taxon>
        <taxon>Bacilli</taxon>
        <taxon>Bacillales</taxon>
        <taxon>Bacillaceae</taxon>
        <taxon>Bacillus</taxon>
        <taxon>Bacillus cereus group</taxon>
    </lineage>
</organism>
<protein>
    <recommendedName>
        <fullName evidence="1">Diaminopimelate epimerase</fullName>
        <shortName evidence="1">DAP epimerase</shortName>
        <ecNumber evidence="1">5.1.1.7</ecNumber>
    </recommendedName>
    <alternativeName>
        <fullName evidence="1">PLP-independent amino acid racemase</fullName>
    </alternativeName>
</protein>